<reference key="1">
    <citation type="journal article" date="2010" name="Stand. Genomic Sci.">
        <title>Complete genome sequence of Rhizobium leguminosarum bv trifolii strain WSM2304, an effective microsymbiont of the South American clover Trifolium polymorphum.</title>
        <authorList>
            <person name="Reeve W."/>
            <person name="O'Hara G."/>
            <person name="Chain P."/>
            <person name="Ardley J."/>
            <person name="Brau L."/>
            <person name="Nandesena K."/>
            <person name="Tiwari R."/>
            <person name="Malfatti S."/>
            <person name="Kiss H."/>
            <person name="Lapidus A."/>
            <person name="Copeland A."/>
            <person name="Nolan M."/>
            <person name="Land M."/>
            <person name="Ivanova N."/>
            <person name="Mavromatis K."/>
            <person name="Markowitz V."/>
            <person name="Kyrpides N."/>
            <person name="Melino V."/>
            <person name="Denton M."/>
            <person name="Yates R."/>
            <person name="Howieson J."/>
        </authorList>
    </citation>
    <scope>NUCLEOTIDE SEQUENCE [LARGE SCALE GENOMIC DNA]</scope>
    <source>
        <strain>WSM2304</strain>
    </source>
</reference>
<feature type="chain" id="PRO_1000089760" description="Recombination protein RecR">
    <location>
        <begin position="1"/>
        <end position="201"/>
    </location>
</feature>
<feature type="domain" description="Toprim" evidence="1">
    <location>
        <begin position="83"/>
        <end position="178"/>
    </location>
</feature>
<feature type="zinc finger region" description="C4-type" evidence="1">
    <location>
        <begin position="60"/>
        <end position="75"/>
    </location>
</feature>
<gene>
    <name evidence="1" type="primary">recR</name>
    <name type="ordered locus">Rleg2_4074</name>
</gene>
<name>RECR_RHILW</name>
<organism>
    <name type="scientific">Rhizobium leguminosarum bv. trifolii (strain WSM2304)</name>
    <dbReference type="NCBI Taxonomy" id="395492"/>
    <lineage>
        <taxon>Bacteria</taxon>
        <taxon>Pseudomonadati</taxon>
        <taxon>Pseudomonadota</taxon>
        <taxon>Alphaproteobacteria</taxon>
        <taxon>Hyphomicrobiales</taxon>
        <taxon>Rhizobiaceae</taxon>
        <taxon>Rhizobium/Agrobacterium group</taxon>
        <taxon>Rhizobium</taxon>
    </lineage>
</organism>
<comment type="function">
    <text evidence="1">May play a role in DNA repair. It seems to be involved in an RecBC-independent recombinational process of DNA repair. It may act with RecF and RecO.</text>
</comment>
<comment type="similarity">
    <text evidence="1">Belongs to the RecR family.</text>
</comment>
<accession>B5ZW36</accession>
<keyword id="KW-0227">DNA damage</keyword>
<keyword id="KW-0233">DNA recombination</keyword>
<keyword id="KW-0234">DNA repair</keyword>
<keyword id="KW-0479">Metal-binding</keyword>
<keyword id="KW-1185">Reference proteome</keyword>
<keyword id="KW-0862">Zinc</keyword>
<keyword id="KW-0863">Zinc-finger</keyword>
<evidence type="ECO:0000255" key="1">
    <source>
        <dbReference type="HAMAP-Rule" id="MF_00017"/>
    </source>
</evidence>
<dbReference type="EMBL" id="CP001191">
    <property type="protein sequence ID" value="ACI57336.1"/>
    <property type="molecule type" value="Genomic_DNA"/>
</dbReference>
<dbReference type="RefSeq" id="WP_012559493.1">
    <property type="nucleotide sequence ID" value="NC_011369.1"/>
</dbReference>
<dbReference type="SMR" id="B5ZW36"/>
<dbReference type="STRING" id="395492.Rleg2_4074"/>
<dbReference type="KEGG" id="rlt:Rleg2_4074"/>
<dbReference type="eggNOG" id="COG0353">
    <property type="taxonomic scope" value="Bacteria"/>
</dbReference>
<dbReference type="HOGENOM" id="CLU_060739_1_1_5"/>
<dbReference type="Proteomes" id="UP000008330">
    <property type="component" value="Chromosome"/>
</dbReference>
<dbReference type="GO" id="GO:0003677">
    <property type="term" value="F:DNA binding"/>
    <property type="evidence" value="ECO:0007669"/>
    <property type="project" value="UniProtKB-UniRule"/>
</dbReference>
<dbReference type="GO" id="GO:0008270">
    <property type="term" value="F:zinc ion binding"/>
    <property type="evidence" value="ECO:0007669"/>
    <property type="project" value="UniProtKB-KW"/>
</dbReference>
<dbReference type="GO" id="GO:0006310">
    <property type="term" value="P:DNA recombination"/>
    <property type="evidence" value="ECO:0007669"/>
    <property type="project" value="UniProtKB-UniRule"/>
</dbReference>
<dbReference type="GO" id="GO:0006281">
    <property type="term" value="P:DNA repair"/>
    <property type="evidence" value="ECO:0007669"/>
    <property type="project" value="UniProtKB-UniRule"/>
</dbReference>
<dbReference type="CDD" id="cd01025">
    <property type="entry name" value="TOPRIM_recR"/>
    <property type="match status" value="1"/>
</dbReference>
<dbReference type="Gene3D" id="3.40.1360.10">
    <property type="match status" value="1"/>
</dbReference>
<dbReference type="Gene3D" id="6.10.250.240">
    <property type="match status" value="1"/>
</dbReference>
<dbReference type="Gene3D" id="1.10.8.420">
    <property type="entry name" value="RecR Domain 1"/>
    <property type="match status" value="1"/>
</dbReference>
<dbReference type="HAMAP" id="MF_00017">
    <property type="entry name" value="RecR"/>
    <property type="match status" value="1"/>
</dbReference>
<dbReference type="InterPro" id="IPR000093">
    <property type="entry name" value="DNA_Rcmb_RecR"/>
</dbReference>
<dbReference type="InterPro" id="IPR023627">
    <property type="entry name" value="Rcmb_RecR"/>
</dbReference>
<dbReference type="InterPro" id="IPR015967">
    <property type="entry name" value="Rcmb_RecR_Znf"/>
</dbReference>
<dbReference type="InterPro" id="IPR006171">
    <property type="entry name" value="TOPRIM_dom"/>
</dbReference>
<dbReference type="InterPro" id="IPR034137">
    <property type="entry name" value="TOPRIM_RecR"/>
</dbReference>
<dbReference type="NCBIfam" id="TIGR00615">
    <property type="entry name" value="recR"/>
    <property type="match status" value="1"/>
</dbReference>
<dbReference type="PANTHER" id="PTHR30446">
    <property type="entry name" value="RECOMBINATION PROTEIN RECR"/>
    <property type="match status" value="1"/>
</dbReference>
<dbReference type="PANTHER" id="PTHR30446:SF0">
    <property type="entry name" value="RECOMBINATION PROTEIN RECR"/>
    <property type="match status" value="1"/>
</dbReference>
<dbReference type="Pfam" id="PF21175">
    <property type="entry name" value="RecR_C"/>
    <property type="match status" value="1"/>
</dbReference>
<dbReference type="Pfam" id="PF21176">
    <property type="entry name" value="RecR_HhH"/>
    <property type="match status" value="1"/>
</dbReference>
<dbReference type="Pfam" id="PF02132">
    <property type="entry name" value="RecR_ZnF"/>
    <property type="match status" value="1"/>
</dbReference>
<dbReference type="Pfam" id="PF13662">
    <property type="entry name" value="Toprim_4"/>
    <property type="match status" value="1"/>
</dbReference>
<dbReference type="SMART" id="SM00493">
    <property type="entry name" value="TOPRIM"/>
    <property type="match status" value="1"/>
</dbReference>
<dbReference type="SUPFAM" id="SSF111304">
    <property type="entry name" value="Recombination protein RecR"/>
    <property type="match status" value="1"/>
</dbReference>
<dbReference type="PROSITE" id="PS01300">
    <property type="entry name" value="RECR"/>
    <property type="match status" value="1"/>
</dbReference>
<dbReference type="PROSITE" id="PS50880">
    <property type="entry name" value="TOPRIM"/>
    <property type="match status" value="1"/>
</dbReference>
<proteinExistence type="inferred from homology"/>
<sequence length="201" mass="21454">MAKRVTGPEIEKLIQLLAKVPGLGPRSARRAALHLIKKKDQLLGPLSNAMGEAYDKVKICSRCGNVDTVDPCTVCTDTQRDQSIIIVVEDVSDLWALERAGAMNAAYHVLGGTLSPLDGIGPDDLNIRGLIDRIGEGGIRELIIAVNATVEGQTTAHYITDQLQGLNVKITRLAHGVPVGGELDYLDEGTLAAALRARTVI</sequence>
<protein>
    <recommendedName>
        <fullName evidence="1">Recombination protein RecR</fullName>
    </recommendedName>
</protein>